<name>XYL1_PICGU</name>
<proteinExistence type="evidence at protein level"/>
<dbReference type="EC" id="1.1.1.307"/>
<dbReference type="EMBL" id="AF020040">
    <property type="protein sequence ID" value="AAD09330.1"/>
    <property type="molecule type" value="mRNA"/>
</dbReference>
<dbReference type="EMBL" id="DQ297454">
    <property type="protein sequence ID" value="ABB87187.1"/>
    <property type="molecule type" value="Genomic_DNA"/>
</dbReference>
<dbReference type="EMBL" id="CH408155">
    <property type="protein sequence ID" value="EDK36824.1"/>
    <property type="molecule type" value="Genomic_DNA"/>
</dbReference>
<dbReference type="RefSeq" id="XP_001487545.1">
    <property type="nucleotide sequence ID" value="XM_001487495.1"/>
</dbReference>
<dbReference type="SMR" id="O94735"/>
<dbReference type="FunCoup" id="O94735">
    <property type="interactions" value="424"/>
</dbReference>
<dbReference type="STRING" id="294746.O94735"/>
<dbReference type="GeneID" id="5128729"/>
<dbReference type="KEGG" id="pgu:PGUG_00922"/>
<dbReference type="VEuPathDB" id="FungiDB:PGUG_00922"/>
<dbReference type="eggNOG" id="KOG1577">
    <property type="taxonomic scope" value="Eukaryota"/>
</dbReference>
<dbReference type="HOGENOM" id="CLU_023205_0_0_1"/>
<dbReference type="InParanoid" id="O94735"/>
<dbReference type="OMA" id="VHWPSEG"/>
<dbReference type="OrthoDB" id="416253at2759"/>
<dbReference type="UniPathway" id="UPA00810"/>
<dbReference type="Proteomes" id="UP000001997">
    <property type="component" value="Unassembled WGS sequence"/>
</dbReference>
<dbReference type="GO" id="GO:0032866">
    <property type="term" value="F:D-xylose reductase (NADPH) activity"/>
    <property type="evidence" value="ECO:0007669"/>
    <property type="project" value="InterPro"/>
</dbReference>
<dbReference type="GO" id="GO:0042843">
    <property type="term" value="P:D-xylose catabolic process"/>
    <property type="evidence" value="ECO:0007669"/>
    <property type="project" value="UniProtKB-UniPathway"/>
</dbReference>
<dbReference type="CDD" id="cd19113">
    <property type="entry name" value="AKR_AKR2B1-10"/>
    <property type="match status" value="1"/>
</dbReference>
<dbReference type="FunFam" id="3.20.20.100:FF:000007">
    <property type="entry name" value="NAD(P)H-dependent D-xylose reductase xyl1"/>
    <property type="match status" value="1"/>
</dbReference>
<dbReference type="Gene3D" id="3.20.20.100">
    <property type="entry name" value="NADP-dependent oxidoreductase domain"/>
    <property type="match status" value="1"/>
</dbReference>
<dbReference type="InterPro" id="IPR020471">
    <property type="entry name" value="AKR"/>
</dbReference>
<dbReference type="InterPro" id="IPR044486">
    <property type="entry name" value="AKR2B1"/>
</dbReference>
<dbReference type="InterPro" id="IPR018170">
    <property type="entry name" value="Aldo/ket_reductase_CS"/>
</dbReference>
<dbReference type="InterPro" id="IPR023210">
    <property type="entry name" value="NADP_OxRdtase_dom"/>
</dbReference>
<dbReference type="InterPro" id="IPR036812">
    <property type="entry name" value="NADP_OxRdtase_dom_sf"/>
</dbReference>
<dbReference type="PANTHER" id="PTHR11732">
    <property type="entry name" value="ALDO/KETO REDUCTASE"/>
    <property type="match status" value="1"/>
</dbReference>
<dbReference type="Pfam" id="PF00248">
    <property type="entry name" value="Aldo_ket_red"/>
    <property type="match status" value="1"/>
</dbReference>
<dbReference type="PIRSF" id="PIRSF000097">
    <property type="entry name" value="AKR"/>
    <property type="match status" value="1"/>
</dbReference>
<dbReference type="PRINTS" id="PR00069">
    <property type="entry name" value="ALDKETRDTASE"/>
</dbReference>
<dbReference type="SUPFAM" id="SSF51430">
    <property type="entry name" value="NAD(P)-linked oxidoreductase"/>
    <property type="match status" value="1"/>
</dbReference>
<dbReference type="PROSITE" id="PS00798">
    <property type="entry name" value="ALDOKETO_REDUCTASE_1"/>
    <property type="match status" value="1"/>
</dbReference>
<dbReference type="PROSITE" id="PS00062">
    <property type="entry name" value="ALDOKETO_REDUCTASE_2"/>
    <property type="match status" value="1"/>
</dbReference>
<dbReference type="PROSITE" id="PS00063">
    <property type="entry name" value="ALDOKETO_REDUCTASE_3"/>
    <property type="match status" value="1"/>
</dbReference>
<sequence>MSITLNSGYEMPSVGFGCWKVDKATCADTIYNAIKVGYRLFDGAEDYGNEKEVGEGINRALDEGLVARDELFVVSKLWNSFHDPKNVEKALDRTLSDLKVDYLDLFLIHFPIAFKFVPFEEKYPPGFYCGDGDKFIYEGVPIIDTWRALEKMVEKGKIRSIGISNFPGALIQDLLRGAKIKPAVLQIEHHPYLQQPRLIEYVQSQGIAITAYSSFGPQSFVELNHPRVKDVKPLFEHDVIKSVAEKANKTPAQVLLRWATQRGLAVIPKSNNPDRLLSNLKVNDFDLSQEDFKEISKLDIELRFNNPWDWDKIPTFV</sequence>
<evidence type="ECO:0000250" key="1"/>
<evidence type="ECO:0000305" key="2"/>
<accession>O94735</accession>
<accession>A5DCB7</accession>
<accession>Q2V572</accession>
<comment type="function">
    <text>Reduces D-xylose into xylitol. Preferentially utilizes NADPH as a cosubstrate.</text>
</comment>
<comment type="catalytic activity">
    <reaction>
        <text>xylitol + NAD(+) = D-xylose + NADH + H(+)</text>
        <dbReference type="Rhea" id="RHEA:27441"/>
        <dbReference type="ChEBI" id="CHEBI:15378"/>
        <dbReference type="ChEBI" id="CHEBI:17151"/>
        <dbReference type="ChEBI" id="CHEBI:53455"/>
        <dbReference type="ChEBI" id="CHEBI:57540"/>
        <dbReference type="ChEBI" id="CHEBI:57945"/>
        <dbReference type="EC" id="1.1.1.307"/>
    </reaction>
</comment>
<comment type="catalytic activity">
    <reaction>
        <text>xylitol + NADP(+) = D-xylose + NADPH + H(+)</text>
        <dbReference type="Rhea" id="RHEA:27445"/>
        <dbReference type="ChEBI" id="CHEBI:15378"/>
        <dbReference type="ChEBI" id="CHEBI:17151"/>
        <dbReference type="ChEBI" id="CHEBI:53455"/>
        <dbReference type="ChEBI" id="CHEBI:57783"/>
        <dbReference type="ChEBI" id="CHEBI:58349"/>
        <dbReference type="EC" id="1.1.1.307"/>
    </reaction>
</comment>
<comment type="pathway">
    <text>Carbohydrate metabolism; D-xylose degradation.</text>
</comment>
<comment type="similarity">
    <text evidence="2">Belongs to the aldo/keto reductase family.</text>
</comment>
<gene>
    <name type="primary">XYL1</name>
    <name type="ORF">PGUG_00922</name>
</gene>
<reference key="1">
    <citation type="journal article" date="1998" name="Appl. Microbiol. Biotechnol.">
        <title>Cloning and expression of Candida guilliermondii xylose reductase gene (xyl1) in Pichia pastoris.</title>
        <authorList>
            <person name="Handumrongkul C."/>
            <person name="Ma D.-P."/>
            <person name="Silva J.L."/>
        </authorList>
    </citation>
    <scope>NUCLEOTIDE SEQUENCE [MRNA]</scope>
    <scope>CHARACTERIZATION</scope>
    <source>
        <strain>ATCC 20118 / CBS 6319 / IFO 0838 / JCM 2298 / NCYC 1399</strain>
    </source>
</reference>
<reference key="2">
    <citation type="submission" date="2005-11" db="EMBL/GenBank/DDBJ databases">
        <title>Isolation and phylogenetic relationship of aldose reductase in Candida species.</title>
        <authorList>
            <person name="Guo C."/>
            <person name="He P."/>
            <person name="Lu D."/>
            <person name="Shen A."/>
            <person name="Jiang N."/>
        </authorList>
    </citation>
    <scope>NUCLEOTIDE SEQUENCE [GENOMIC DNA]</scope>
</reference>
<reference key="3">
    <citation type="journal article" date="2009" name="Nature">
        <title>Evolution of pathogenicity and sexual reproduction in eight Candida genomes.</title>
        <authorList>
            <person name="Butler G."/>
            <person name="Rasmussen M.D."/>
            <person name="Lin M.F."/>
            <person name="Santos M.A.S."/>
            <person name="Sakthikumar S."/>
            <person name="Munro C.A."/>
            <person name="Rheinbay E."/>
            <person name="Grabherr M."/>
            <person name="Forche A."/>
            <person name="Reedy J.L."/>
            <person name="Agrafioti I."/>
            <person name="Arnaud M.B."/>
            <person name="Bates S."/>
            <person name="Brown A.J.P."/>
            <person name="Brunke S."/>
            <person name="Costanzo M.C."/>
            <person name="Fitzpatrick D.A."/>
            <person name="de Groot P.W.J."/>
            <person name="Harris D."/>
            <person name="Hoyer L.L."/>
            <person name="Hube B."/>
            <person name="Klis F.M."/>
            <person name="Kodira C."/>
            <person name="Lennard N."/>
            <person name="Logue M.E."/>
            <person name="Martin R."/>
            <person name="Neiman A.M."/>
            <person name="Nikolaou E."/>
            <person name="Quail M.A."/>
            <person name="Quinn J."/>
            <person name="Santos M.C."/>
            <person name="Schmitzberger F.F."/>
            <person name="Sherlock G."/>
            <person name="Shah P."/>
            <person name="Silverstein K.A.T."/>
            <person name="Skrzypek M.S."/>
            <person name="Soll D."/>
            <person name="Staggs R."/>
            <person name="Stansfield I."/>
            <person name="Stumpf M.P.H."/>
            <person name="Sudbery P.E."/>
            <person name="Srikantha T."/>
            <person name="Zeng Q."/>
            <person name="Berman J."/>
            <person name="Berriman M."/>
            <person name="Heitman J."/>
            <person name="Gow N.A.R."/>
            <person name="Lorenz M.C."/>
            <person name="Birren B.W."/>
            <person name="Kellis M."/>
            <person name="Cuomo C.A."/>
        </authorList>
    </citation>
    <scope>NUCLEOTIDE SEQUENCE [LARGE SCALE GENOMIC DNA]</scope>
    <source>
        <strain>ATCC 6260 / CBS 566 / DSM 6381 / JCM 1539 / NBRC 10279 / NRRL Y-324</strain>
    </source>
</reference>
<feature type="chain" id="PRO_0000124666" description="NADPH-dependent D-xylose reductase">
    <location>
        <begin position="1"/>
        <end position="317"/>
    </location>
</feature>
<feature type="active site" description="Proton donor" evidence="1">
    <location>
        <position position="47"/>
    </location>
</feature>
<feature type="binding site" evidence="1">
    <location>
        <position position="109"/>
    </location>
    <ligand>
        <name>substrate</name>
    </ligand>
</feature>
<feature type="binding site" evidence="1">
    <location>
        <begin position="164"/>
        <end position="165"/>
    </location>
    <ligand>
        <name>NADP(+)</name>
        <dbReference type="ChEBI" id="CHEBI:58349"/>
    </ligand>
</feature>
<feature type="binding site" evidence="1">
    <location>
        <begin position="213"/>
        <end position="222"/>
    </location>
    <ligand>
        <name>NADP(+)</name>
        <dbReference type="ChEBI" id="CHEBI:58349"/>
    </ligand>
</feature>
<feature type="binding site" evidence="1">
    <location>
        <begin position="269"/>
        <end position="279"/>
    </location>
    <ligand>
        <name>NADP(+)</name>
        <dbReference type="ChEBI" id="CHEBI:58349"/>
    </ligand>
</feature>
<feature type="site" description="Lowers pKa of active site Tyr" evidence="1">
    <location>
        <position position="76"/>
    </location>
</feature>
<feature type="sequence conflict" description="In Ref. 1; AAD09330." evidence="2" ref="1">
    <original>T</original>
    <variation>K</variation>
    <location>
        <position position="4"/>
    </location>
</feature>
<feature type="sequence conflict" description="In Ref. 1; AAD09330." evidence="2" ref="1">
    <original>E</original>
    <variation>D</variation>
    <location>
        <position position="10"/>
    </location>
</feature>
<feature type="sequence conflict" description="In Ref. 1; AAD09330." evidence="2" ref="1">
    <original>K</original>
    <variation>N</variation>
    <location>
        <position position="23"/>
    </location>
</feature>
<feature type="sequence conflict" description="In Ref. 2; ABB87187." evidence="2" ref="2">
    <original>K</original>
    <variation>R</variation>
    <location>
        <position position="51"/>
    </location>
</feature>
<feature type="sequence conflict" description="In Ref. 1; AAD09330." evidence="2" ref="1">
    <original>E</original>
    <variation>D</variation>
    <location>
        <position position="55"/>
    </location>
</feature>
<feature type="sequence conflict" description="In Ref. 2; ABB87187." evidence="2" ref="2">
    <original>S</original>
    <variation>P</variation>
    <location>
        <position position="75"/>
    </location>
</feature>
<feature type="sequence conflict" description="In Ref. 1; AAD09330." evidence="2" ref="1">
    <original>R</original>
    <variation>K</variation>
    <location>
        <position position="93"/>
    </location>
</feature>
<feature type="sequence conflict" description="In Ref. 1; AAD09330." evidence="2" ref="1">
    <original>I</original>
    <variation>H</variation>
    <location>
        <position position="136"/>
    </location>
</feature>
<feature type="sequence conflict" description="In Ref. 2; ABB87187." evidence="2" ref="2">
    <original>I</original>
    <variation>T</variation>
    <location>
        <position position="136"/>
    </location>
</feature>
<feature type="sequence conflict" description="In Ref. 1; AAD09330 and 2; ABB87187." evidence="2" ref="1 2">
    <original>G</original>
    <variation>D</variation>
    <location>
        <position position="139"/>
    </location>
</feature>
<feature type="sequence conflict" description="In Ref. 1; AAD09330." evidence="2" ref="1">
    <original>I</original>
    <variation>L</variation>
    <location>
        <position position="142"/>
    </location>
</feature>
<feature type="sequence conflict" description="In Ref. 1; AAD09330." evidence="2" ref="1">
    <original>M</original>
    <variation>L</variation>
    <location>
        <position position="152"/>
    </location>
</feature>
<feature type="sequence conflict" description="In Ref. 1; AAD09330." evidence="2" ref="1">
    <original>P</original>
    <variation>S</variation>
    <location>
        <position position="167"/>
    </location>
</feature>
<feature type="sequence conflict" description="In Ref. 1; AAD09330." evidence="2" ref="1">
    <original>G</original>
    <variation>S</variation>
    <location>
        <position position="177"/>
    </location>
</feature>
<feature type="sequence conflict" description="In Ref. 1; AAD09330." evidence="2" ref="1">
    <original>I</original>
    <variation>V</variation>
    <location>
        <position position="199"/>
    </location>
</feature>
<feature type="sequence conflict" description="In Ref. 1; AAD09330." evidence="2" ref="1">
    <original>N</original>
    <variation>D</variation>
    <location>
        <position position="224"/>
    </location>
</feature>
<feature type="sequence conflict" description="In Ref. 1; AAD09330." evidence="2" ref="1">
    <original>EKAN</original>
    <variation>GKVK</variation>
    <location>
        <begin position="245"/>
        <end position="248"/>
    </location>
</feature>
<feature type="sequence conflict" description="In Ref. 1; AAD09330." evidence="2" ref="1">
    <original>K</original>
    <variation>Q</variation>
    <location>
        <position position="293"/>
    </location>
</feature>
<feature type="sequence conflict" description="In Ref. 1; AAD09330." evidence="2" ref="1">
    <original>V</original>
    <variation>I</variation>
    <location>
        <position position="317"/>
    </location>
</feature>
<protein>
    <recommendedName>
        <fullName>NADPH-dependent D-xylose reductase</fullName>
        <shortName>XR</shortName>
        <ecNumber>1.1.1.307</ecNumber>
    </recommendedName>
</protein>
<organism>
    <name type="scientific">Meyerozyma guilliermondii (strain ATCC 6260 / CBS 566 / DSM 6381 / JCM 1539 / NBRC 10279 / NRRL Y-324)</name>
    <name type="common">Yeast</name>
    <name type="synonym">Candida guilliermondii</name>
    <dbReference type="NCBI Taxonomy" id="294746"/>
    <lineage>
        <taxon>Eukaryota</taxon>
        <taxon>Fungi</taxon>
        <taxon>Dikarya</taxon>
        <taxon>Ascomycota</taxon>
        <taxon>Saccharomycotina</taxon>
        <taxon>Pichiomycetes</taxon>
        <taxon>Debaryomycetaceae</taxon>
        <taxon>Meyerozyma</taxon>
    </lineage>
</organism>
<keyword id="KW-0119">Carbohydrate metabolism</keyword>
<keyword id="KW-0521">NADP</keyword>
<keyword id="KW-0560">Oxidoreductase</keyword>
<keyword id="KW-1185">Reference proteome</keyword>
<keyword id="KW-0859">Xylose metabolism</keyword>